<accession>Q8KEJ1</accession>
<sequence>MDSLRLGTYTFSSRLILGTGKFSSTSAMIKAVRASGTQLVTVALRRFNREQAEDDLFGPLSEIEGLTLMPNTSGAATAKEAIKAAHIARELSGSPFIKVEIHPNPHHLMPDPIETWEACKILAAEGFIVMPYIPADPVLAKRLEEVGCSSVMPLGSAIGSGQGLSTAEMVKIIIRESSVPVIVDAGLRSPSEACAAMEMGCEAVLVNSAVAVARDPAAMALAFAKAVEAGFEARNAGLMPRSGSAVATSPLTSFLGATR</sequence>
<dbReference type="EC" id="2.8.1.10" evidence="1"/>
<dbReference type="EMBL" id="AE006470">
    <property type="protein sequence ID" value="AAM71935.1"/>
    <property type="molecule type" value="Genomic_DNA"/>
</dbReference>
<dbReference type="RefSeq" id="NP_661593.1">
    <property type="nucleotide sequence ID" value="NC_002932.3"/>
</dbReference>
<dbReference type="RefSeq" id="WP_010932380.1">
    <property type="nucleotide sequence ID" value="NC_002932.3"/>
</dbReference>
<dbReference type="SMR" id="Q8KEJ1"/>
<dbReference type="STRING" id="194439.CT0698"/>
<dbReference type="EnsemblBacteria" id="AAM71935">
    <property type="protein sequence ID" value="AAM71935"/>
    <property type="gene ID" value="CT0698"/>
</dbReference>
<dbReference type="KEGG" id="cte:CT0698"/>
<dbReference type="PATRIC" id="fig|194439.7.peg.641"/>
<dbReference type="eggNOG" id="COG2022">
    <property type="taxonomic scope" value="Bacteria"/>
</dbReference>
<dbReference type="HOGENOM" id="CLU_062233_1_0_10"/>
<dbReference type="OrthoDB" id="9805935at2"/>
<dbReference type="UniPathway" id="UPA00060"/>
<dbReference type="Proteomes" id="UP000001007">
    <property type="component" value="Chromosome"/>
</dbReference>
<dbReference type="GO" id="GO:0005737">
    <property type="term" value="C:cytoplasm"/>
    <property type="evidence" value="ECO:0007669"/>
    <property type="project" value="UniProtKB-SubCell"/>
</dbReference>
<dbReference type="GO" id="GO:1990107">
    <property type="term" value="F:thiazole synthase activity"/>
    <property type="evidence" value="ECO:0007669"/>
    <property type="project" value="UniProtKB-EC"/>
</dbReference>
<dbReference type="GO" id="GO:0009229">
    <property type="term" value="P:thiamine diphosphate biosynthetic process"/>
    <property type="evidence" value="ECO:0007669"/>
    <property type="project" value="UniProtKB-UniRule"/>
</dbReference>
<dbReference type="CDD" id="cd04728">
    <property type="entry name" value="ThiG"/>
    <property type="match status" value="1"/>
</dbReference>
<dbReference type="Gene3D" id="3.20.20.70">
    <property type="entry name" value="Aldolase class I"/>
    <property type="match status" value="1"/>
</dbReference>
<dbReference type="HAMAP" id="MF_00443">
    <property type="entry name" value="ThiG"/>
    <property type="match status" value="1"/>
</dbReference>
<dbReference type="InterPro" id="IPR013785">
    <property type="entry name" value="Aldolase_TIM"/>
</dbReference>
<dbReference type="InterPro" id="IPR033983">
    <property type="entry name" value="Thiazole_synthase_ThiG"/>
</dbReference>
<dbReference type="InterPro" id="IPR008867">
    <property type="entry name" value="ThiG"/>
</dbReference>
<dbReference type="PANTHER" id="PTHR34266">
    <property type="entry name" value="THIAZOLE SYNTHASE"/>
    <property type="match status" value="1"/>
</dbReference>
<dbReference type="PANTHER" id="PTHR34266:SF2">
    <property type="entry name" value="THIAZOLE SYNTHASE"/>
    <property type="match status" value="1"/>
</dbReference>
<dbReference type="Pfam" id="PF05690">
    <property type="entry name" value="ThiG"/>
    <property type="match status" value="1"/>
</dbReference>
<dbReference type="SUPFAM" id="SSF110399">
    <property type="entry name" value="ThiG-like"/>
    <property type="match status" value="1"/>
</dbReference>
<keyword id="KW-0963">Cytoplasm</keyword>
<keyword id="KW-1185">Reference proteome</keyword>
<keyword id="KW-0704">Schiff base</keyword>
<keyword id="KW-0784">Thiamine biosynthesis</keyword>
<keyword id="KW-0808">Transferase</keyword>
<protein>
    <recommendedName>
        <fullName evidence="1">Thiazole synthase</fullName>
        <ecNumber evidence="1">2.8.1.10</ecNumber>
    </recommendedName>
</protein>
<feature type="chain" id="PRO_0000162804" description="Thiazole synthase">
    <location>
        <begin position="1"/>
        <end position="259"/>
    </location>
</feature>
<feature type="active site" description="Schiff-base intermediate with DXP" evidence="1">
    <location>
        <position position="98"/>
    </location>
</feature>
<feature type="binding site" evidence="1">
    <location>
        <position position="159"/>
    </location>
    <ligand>
        <name>1-deoxy-D-xylulose 5-phosphate</name>
        <dbReference type="ChEBI" id="CHEBI:57792"/>
    </ligand>
</feature>
<feature type="binding site" evidence="1">
    <location>
        <begin position="185"/>
        <end position="186"/>
    </location>
    <ligand>
        <name>1-deoxy-D-xylulose 5-phosphate</name>
        <dbReference type="ChEBI" id="CHEBI:57792"/>
    </ligand>
</feature>
<feature type="binding site" evidence="1">
    <location>
        <begin position="207"/>
        <end position="208"/>
    </location>
    <ligand>
        <name>1-deoxy-D-xylulose 5-phosphate</name>
        <dbReference type="ChEBI" id="CHEBI:57792"/>
    </ligand>
</feature>
<comment type="function">
    <text evidence="1">Catalyzes the rearrangement of 1-deoxy-D-xylulose 5-phosphate (DXP) to produce the thiazole phosphate moiety of thiamine. Sulfur is provided by the thiocarboxylate moiety of the carrier protein ThiS. In vitro, sulfur can be provided by H(2)S.</text>
</comment>
<comment type="catalytic activity">
    <reaction evidence="1">
        <text>[ThiS sulfur-carrier protein]-C-terminal-Gly-aminoethanethioate + 2-iminoacetate + 1-deoxy-D-xylulose 5-phosphate = [ThiS sulfur-carrier protein]-C-terminal Gly-Gly + 2-[(2R,5Z)-2-carboxy-4-methylthiazol-5(2H)-ylidene]ethyl phosphate + 2 H2O + H(+)</text>
        <dbReference type="Rhea" id="RHEA:26297"/>
        <dbReference type="Rhea" id="RHEA-COMP:12909"/>
        <dbReference type="Rhea" id="RHEA-COMP:19908"/>
        <dbReference type="ChEBI" id="CHEBI:15377"/>
        <dbReference type="ChEBI" id="CHEBI:15378"/>
        <dbReference type="ChEBI" id="CHEBI:57792"/>
        <dbReference type="ChEBI" id="CHEBI:62899"/>
        <dbReference type="ChEBI" id="CHEBI:77846"/>
        <dbReference type="ChEBI" id="CHEBI:90778"/>
        <dbReference type="ChEBI" id="CHEBI:232372"/>
        <dbReference type="EC" id="2.8.1.10"/>
    </reaction>
</comment>
<comment type="pathway">
    <text evidence="1">Cofactor biosynthesis; thiamine diphosphate biosynthesis.</text>
</comment>
<comment type="subunit">
    <text evidence="1">Homotetramer. Forms heterodimers with either ThiH or ThiS.</text>
</comment>
<comment type="subcellular location">
    <subcellularLocation>
        <location evidence="1">Cytoplasm</location>
    </subcellularLocation>
</comment>
<comment type="similarity">
    <text evidence="1">Belongs to the ThiG family.</text>
</comment>
<name>THIG_CHLTE</name>
<gene>
    <name evidence="1" type="primary">thiG</name>
    <name type="ordered locus">CT0698</name>
</gene>
<proteinExistence type="inferred from homology"/>
<organism>
    <name type="scientific">Chlorobaculum tepidum (strain ATCC 49652 / DSM 12025 / NBRC 103806 / TLS)</name>
    <name type="common">Chlorobium tepidum</name>
    <dbReference type="NCBI Taxonomy" id="194439"/>
    <lineage>
        <taxon>Bacteria</taxon>
        <taxon>Pseudomonadati</taxon>
        <taxon>Chlorobiota</taxon>
        <taxon>Chlorobiia</taxon>
        <taxon>Chlorobiales</taxon>
        <taxon>Chlorobiaceae</taxon>
        <taxon>Chlorobaculum</taxon>
    </lineage>
</organism>
<evidence type="ECO:0000255" key="1">
    <source>
        <dbReference type="HAMAP-Rule" id="MF_00443"/>
    </source>
</evidence>
<reference key="1">
    <citation type="journal article" date="2002" name="Proc. Natl. Acad. Sci. U.S.A.">
        <title>The complete genome sequence of Chlorobium tepidum TLS, a photosynthetic, anaerobic, green-sulfur bacterium.</title>
        <authorList>
            <person name="Eisen J.A."/>
            <person name="Nelson K.E."/>
            <person name="Paulsen I.T."/>
            <person name="Heidelberg J.F."/>
            <person name="Wu M."/>
            <person name="Dodson R.J."/>
            <person name="DeBoy R.T."/>
            <person name="Gwinn M.L."/>
            <person name="Nelson W.C."/>
            <person name="Haft D.H."/>
            <person name="Hickey E.K."/>
            <person name="Peterson J.D."/>
            <person name="Durkin A.S."/>
            <person name="Kolonay J.F."/>
            <person name="Yang F."/>
            <person name="Holt I.E."/>
            <person name="Umayam L.A."/>
            <person name="Mason T.M."/>
            <person name="Brenner M."/>
            <person name="Shea T.P."/>
            <person name="Parksey D.S."/>
            <person name="Nierman W.C."/>
            <person name="Feldblyum T.V."/>
            <person name="Hansen C.L."/>
            <person name="Craven M.B."/>
            <person name="Radune D."/>
            <person name="Vamathevan J.J."/>
            <person name="Khouri H.M."/>
            <person name="White O."/>
            <person name="Gruber T.M."/>
            <person name="Ketchum K.A."/>
            <person name="Venter J.C."/>
            <person name="Tettelin H."/>
            <person name="Bryant D.A."/>
            <person name="Fraser C.M."/>
        </authorList>
    </citation>
    <scope>NUCLEOTIDE SEQUENCE [LARGE SCALE GENOMIC DNA]</scope>
    <source>
        <strain>ATCC 49652 / DSM 12025 / NBRC 103806 / TLS</strain>
    </source>
</reference>